<reference key="1">
    <citation type="journal article" date="1998" name="Nucleic Acids Res.">
        <title>Genetic characterization of the mRNAs encoding alpha-bungarotoxin: isoforms and RNA editing in Bungarus multicinctus gland cells.</title>
        <authorList>
            <person name="Liu L.-F."/>
            <person name="Chang C.-C."/>
            <person name="Liau M.-Y."/>
            <person name="Kuo K.-W."/>
        </authorList>
    </citation>
    <scope>NUCLEOTIDE SEQUENCE [GENOMIC DNA / MRNA]</scope>
    <source>
        <tissue>Venom</tissue>
        <tissue>Venom gland</tissue>
    </source>
</reference>
<reference key="2">
    <citation type="journal article" date="1999" name="Nucleic Acids Res.">
        <title>Genetic organization of alpha-bungarotoxins from Bungarus multicinctus (Taiwan banded krait): evidence showing that the production of alpha-bungarotoxin isotoxins is not derived from edited mRNAs.</title>
        <authorList>
            <person name="Chang L.-S."/>
            <person name="Lin S.-K."/>
            <person name="Huang H.-B."/>
            <person name="Hsiao M."/>
        </authorList>
    </citation>
    <scope>NUCLEOTIDE SEQUENCE [GENOMIC DNA / MRNA]</scope>
    <source>
        <tissue>Liver</tissue>
        <tissue>Venom gland</tissue>
    </source>
</reference>
<reference key="3">
    <citation type="journal article" date="1972" name="Hoppe-Seyler's Z. Physiol. Chem.">
        <title>Purification, properties and amino acid sequence of alpha-bungarotoxin from the venom of Bungarus multicinctus.</title>
        <authorList>
            <person name="Mebs D."/>
            <person name="Narita K."/>
            <person name="Iwanaga S."/>
            <person name="Samejima Y."/>
            <person name="Lee C.Y."/>
        </authorList>
    </citation>
    <scope>PROTEIN SEQUENCE OF 22-95</scope>
    <scope>SUBCELLULAR LOCATION</scope>
    <source>
        <tissue>Venom</tissue>
    </source>
</reference>
<reference key="4">
    <citation type="journal article" date="1987" name="FEBS Lett.">
        <title>Primary structure of alpha-bungarotoxin. Six amino acid residues differ from the previously reported sequence.</title>
        <authorList>
            <person name="Ohta M."/>
            <person name="Ohta K."/>
            <person name="Nishitani H."/>
            <person name="Hayashi K."/>
        </authorList>
    </citation>
    <scope>SEQUENCE REVISION TO 30-32; 88-89 AND 92-93</scope>
    <source>
        <tissue>Venom</tissue>
    </source>
</reference>
<reference key="5">
    <citation type="journal article" date="1988" name="Biochem. Biophys. Res. Commun.">
        <title>Isolation of antigenically reactive peptide fragments and localization of antigenic regions of alpha-bungarotoxin.</title>
        <authorList>
            <person name="Chuang L.Y."/>
            <person name="Chang C.-C."/>
        </authorList>
    </citation>
    <scope>PROTEIN SEQUENCE OF 22-95</scope>
    <source>
        <tissue>Venom</tissue>
    </source>
</reference>
<reference key="6">
    <citation type="journal article" date="1995" name="Biochem. Biophys. Res. Commun.">
        <title>cDNA sequence analysis and expression of alpha-bungarotoxin from Taiwan banded krait (Bungarus multicinctus).</title>
        <authorList>
            <person name="Kuo K.-W."/>
            <person name="Chen Y.C."/>
            <person name="Chang C.-C."/>
        </authorList>
    </citation>
    <scope>NUCLEOTIDE SEQUENCE [MRNA] OF 22-95</scope>
    <source>
        <tissue>Venom gland</tissue>
    </source>
</reference>
<reference key="7">
    <citation type="journal article" date="1988" name="Biochemistry">
        <title>Structural studies of alpha-bungarotoxin. 3. Corrections in the primary sequence and X-ray structure and characterization of an isotoxic alpha-bungarotoxin.</title>
        <authorList>
            <person name="Kosen P.A."/>
            <person name="Finer-Moore J."/>
            <person name="McCarthy M.P."/>
            <person name="Basus V.J."/>
        </authorList>
    </citation>
    <scope>SEQUENCE REVISION TO 30-32 AND 88-89</scope>
    <source>
        <tissue>Venom</tissue>
    </source>
</reference>
<reference key="8">
    <citation type="journal article" date="1989" name="FEBS Lett.">
        <title>Neutralizing monoclonal antibody specific for alpha-bungarotoxin: preparation and characterization of the antibody, and localization of antigenic region of alpha-bungarotoxin.</title>
        <authorList>
            <person name="Kase R."/>
            <person name="Kitagawa H."/>
            <person name="Hayashi K."/>
            <person name="Tanoue K."/>
            <person name="Inagaki F."/>
        </authorList>
    </citation>
    <scope>EPITOPE MAPPING</scope>
</reference>
<reference key="9">
    <citation type="journal article" date="1997" name="J. Biol. Chem.">
        <title>Only snake curaremimetic toxins with a fifth disulfide bond have high affinity for the neuronal alpha7 nicotinic receptor.</title>
        <authorList>
            <person name="Servent D."/>
            <person name="Winckler-Dietrich V."/>
            <person name="Hu H.-Y."/>
            <person name="Kessler P."/>
            <person name="Drevet P."/>
            <person name="Bertrand D."/>
            <person name="Menez A."/>
        </authorList>
    </citation>
    <scope>FUNCTION</scope>
    <source>
        <tissue>Venom</tissue>
    </source>
</reference>
<reference key="10">
    <citation type="journal article" date="1998" name="Neurochem. Int.">
        <title>Effects of alpha-erabutoxin, alpha-bungarotoxin, alpha-cobratoxin and fasciculin on the nicotine-evoked release of dopamine in the rat striatum in vivo.</title>
        <authorList>
            <person name="Dajas-Bailador F."/>
            <person name="Costa G."/>
            <person name="Dajas F."/>
            <person name="Emmett S."/>
        </authorList>
    </citation>
    <scope>FUNCTION</scope>
</reference>
<reference key="11">
    <citation type="journal article" date="2006" name="Proc. Natl. Acad. Sci. U.S.A.">
        <title>The cholinergic antagonist alpha-bungarotoxin also binds and blocks a subset of GABA receptors.</title>
        <authorList>
            <person name="McCann C.M."/>
            <person name="Bracamontes J."/>
            <person name="Steinbach J.H."/>
            <person name="Sanes J.R."/>
        </authorList>
    </citation>
    <scope>FUNCTION</scope>
</reference>
<reference key="12">
    <citation type="journal article" date="2015" name="J. Biol. Chem.">
        <title>Neurotoxins from snake venoms and alpha-conotoxin ImI inhibit functionally active ionotropic gamma-aminobutyric acid (GABA) receptors.</title>
        <authorList>
            <person name="Kudryavtsev D.S."/>
            <person name="Shelukhina I.V."/>
            <person name="Son L.V."/>
            <person name="Ojomoko L.O."/>
            <person name="Kryukova E.V."/>
            <person name="Lyukmanova E.N."/>
            <person name="Zhmak M.N."/>
            <person name="Dolgikh D.A."/>
            <person name="Ivanov I.A."/>
            <person name="Kasheverov I.E."/>
            <person name="Starkov V.G."/>
            <person name="Ramerstorfer J."/>
            <person name="Sieghart W."/>
            <person name="Tsetlin V.I."/>
            <person name="Utkin Y.N."/>
        </authorList>
    </citation>
    <scope>FUNCTION</scope>
</reference>
<reference key="13">
    <citation type="journal article" date="2015" name="Neuropharmacology">
        <title>Snake neurotoxin alpha-bungarotoxin is an antagonist at native GABA(A) receptors.</title>
        <authorList>
            <person name="Hannan S."/>
            <person name="Mortensen M."/>
            <person name="Smart T.G."/>
        </authorList>
    </citation>
    <scope>FUNCTION</scope>
</reference>
<reference evidence="35" key="14">
    <citation type="journal article" date="1986" name="Protein Eng.">
        <title>The crystal structure of alpha-bungarotoxin at 2.5-A resolution: relation to solution structure and binding to acetylcholine receptor.</title>
        <authorList>
            <person name="Love R.A."/>
            <person name="Stroud R.M."/>
        </authorList>
    </citation>
    <scope>X-RAY CRYSTALLOGRAPHY (2.5 ANGSTROMS) OF 22-95</scope>
    <scope>DISULFIDE BOND</scope>
</reference>
<reference key="15">
    <citation type="journal article" date="1988" name="Biochemistry">
        <title>Structural studies of alpha-bungarotoxin. 1. Sequence-specific 1H NMR resonance assignments.</title>
        <authorList>
            <person name="Basus V.J."/>
            <person name="Billeter M."/>
            <person name="Love R.A."/>
            <person name="Stroud R.M."/>
            <person name="Kuntz I.D."/>
        </authorList>
    </citation>
    <scope>STRUCTURE BY NMR OF 22-95</scope>
</reference>
<reference key="16">
    <citation type="journal article" date="1988" name="Biochemistry">
        <title>Structural studies of alpha-bungarotoxin. 2. 1H NMR assignments via an improved relayed coherence transfer nuclear overhauser enhancement experiment.</title>
        <authorList>
            <person name="Basus V.J."/>
            <person name="Scheek R.M."/>
        </authorList>
    </citation>
    <scope>STRUCTURE BY NMR OF 22-95</scope>
</reference>
<reference evidence="18" key="17">
    <citation type="journal article" date="1993" name="Biochemistry">
        <title>NMR solution structure of an alpha-bungarotoxin/nicotinic receptor peptide complex.</title>
        <authorList>
            <person name="Basus V.J."/>
            <person name="Song G."/>
            <person name="Hawrot E."/>
        </authorList>
    </citation>
    <scope>STRUCTURE BY NMR OF 22-95</scope>
</reference>
<reference evidence="19 36" key="18">
    <citation type="journal article" date="1997" name="Proc. Natl. Acad. Sci. U.S.A.">
        <title>Three-dimensional solution structure of the complex of alpha-bungarotoxin with a library-derived peptide.</title>
        <authorList>
            <person name="Scherf T."/>
            <person name="Balass M."/>
            <person name="Fuchs S."/>
            <person name="Katchalski-Katzir E."/>
            <person name="Anglister J."/>
        </authorList>
    </citation>
    <scope>STRUCTURE BY NMR OF 22-95</scope>
</reference>
<reference evidence="23 24 25 26" key="19">
    <citation type="journal article" date="2001" name="J. Biol. Chem.">
        <title>The solution structure of the complex formed between alpha-bungarotoxin and an 18-mer cognate peptide derived from the alpha 1 subunit of the nicotinic acetylcholine receptor from Torpedo californica.</title>
        <authorList>
            <person name="Zeng H."/>
            <person name="Moise L."/>
            <person name="Grant M.A."/>
            <person name="Hawrot E."/>
        </authorList>
    </citation>
    <scope>STRUCTURE BY NMR OF 22-95 IN COMPLEX WITH A 18-RESIDUE PEPTIDE HOMOLOGOUS TO THE BINDING REGION OF THE ALPHA-1 SUBUNIT OF ACETYLCHOLINE RECEPTOR</scope>
</reference>
<reference evidence="20 21" key="20">
    <citation type="journal article" date="2001" name="Proc. Natl. Acad. Sci. U.S.A.">
        <title>A beta -hairpin structure in a 13-mer peptide that binds alpha -bungarotoxin with high affinity and neutralizes its toxicity.</title>
        <authorList>
            <person name="Scherf T."/>
            <person name="Kasher R."/>
            <person name="Balass M."/>
            <person name="Fridkin M."/>
            <person name="Fuchs S."/>
            <person name="Katchalski-Katzir E."/>
        </authorList>
    </citation>
    <scope>STRUCTURE BY NMR OF 22-95 IN COMPLEX WITH A 13-RESIDUE PEPTIDE HOMOLOGOUS TO THE BINDING REGION OF THE ALPHA SUBUNIT OF ACETYLCHOLINE RECEPTOR</scope>
</reference>
<reference evidence="22 27 28 29" key="21">
    <citation type="journal article" date="2002" name="Biochemistry">
        <title>NMR structure of alpha-bungarotoxin free and bound to a mimotope of the nicotinic acetylcholine receptor.</title>
        <authorList>
            <person name="Scarselli M."/>
            <person name="Spiga O."/>
            <person name="Ciutti A."/>
            <person name="Bernini A."/>
            <person name="Bracci L."/>
            <person name="Lelli B."/>
            <person name="Lozzi L."/>
            <person name="Calamandrei D."/>
            <person name="Di Maro D."/>
            <person name="Klein S."/>
            <person name="Niccolai N."/>
        </authorList>
    </citation>
    <scope>STRUCTURE BY NMR OF 22-95 IN COMPLEX WITH A 13-RESIDUE PEPTIDE INHIBITING BINDING WITH ACETYLCHOLINE RECEPTOR</scope>
</reference>
<reference evidence="30 31 32" key="22">
    <citation type="journal article" date="2002" name="J. Biol. Chem.">
        <title>NMR structural analysis of alpha-bungarotoxin and its complex with the principal alpha-neurotoxin-binding sequence on the alpha 7 subunit of a neuronal nicotinic acetylcholine receptor.</title>
        <authorList>
            <person name="Moise L."/>
            <person name="Piserchio A."/>
            <person name="Basus V.J."/>
            <person name="Hawrot E."/>
        </authorList>
    </citation>
    <scope>STRUCTURE BY NMR OF 22-95 IN COMPLEX WITH A 19-RESIDUE PEPTIDE HOMOLOGOUS TO THE BINDING REGION OF THE ALPHA-7 SUBUNIT OF ACETYLCHOLINE RECEPTOR</scope>
</reference>
<reference evidence="33 34" key="23">
    <citation type="journal article" date="2002" name="Neuron">
        <title>The mechanism for acetylcholine receptor inhibition by alpha-neurotoxins and species-specific resistance to alpha-bungarotoxin revealed by NMR.</title>
        <authorList>
            <person name="Samson A.O."/>
            <person name="Scherf T."/>
            <person name="Eisenstein M."/>
            <person name="Chill J.H."/>
            <person name="Anglister J."/>
        </authorList>
    </citation>
    <scope>STRUCTURE BY NMR OF 22-95 IN COMPLEX WITH A 21-RESIDUE PEPTIDE HOMOLOGOUS TO THE BINDING REGION OF THE ALPHA-1 SUBUNIT OF ACETYLCHOLINE RECEPTOR</scope>
</reference>
<feature type="signal peptide" evidence="7 10">
    <location>
        <begin position="1"/>
        <end position="21"/>
    </location>
</feature>
<feature type="chain" id="PRO_0000035406" description="Alpha-bungarotoxin" evidence="7 10">
    <location>
        <begin position="22"/>
        <end position="95"/>
    </location>
</feature>
<feature type="disulfide bond" evidence="9 17">
    <location>
        <begin position="24"/>
        <end position="44"/>
    </location>
</feature>
<feature type="disulfide bond" evidence="9 17">
    <location>
        <begin position="37"/>
        <end position="65"/>
    </location>
</feature>
<feature type="disulfide bond" evidence="9 17">
    <location>
        <begin position="50"/>
        <end position="54"/>
    </location>
</feature>
<feature type="disulfide bond" evidence="9 17">
    <location>
        <begin position="69"/>
        <end position="80"/>
    </location>
</feature>
<feature type="disulfide bond" evidence="9 17">
    <location>
        <begin position="81"/>
        <end position="86"/>
    </location>
</feature>
<feature type="sequence conflict" description="In Ref. 1; AAC83985." evidence="16" ref="1">
    <original>M</original>
    <variation>V</variation>
    <location>
        <position position="48"/>
    </location>
</feature>
<feature type="sequence conflict" description="In Ref. 1; AAC83996." evidence="16" ref="1">
    <original>F</original>
    <variation>S</variation>
    <location>
        <position position="53"/>
    </location>
</feature>
<feature type="sequence conflict" description="In Ref. 1; AAC83986." evidence="16" ref="1">
    <original>S</original>
    <variation>N</variation>
    <location>
        <position position="56"/>
    </location>
</feature>
<feature type="sequence conflict" description="In Ref. 1; AAC83982/AAC83983/AAC83984/AAC83985/AAC83986/AAC83987/AAC83988/AAC83989." evidence="16" ref="1">
    <original>R</original>
    <variation>K</variation>
    <location>
        <position position="57"/>
    </location>
</feature>
<feature type="sequence conflict" description="In Ref. 1; AAC83996." evidence="16" ref="1">
    <original>T</original>
    <variation>P</variation>
    <location>
        <position position="68"/>
    </location>
</feature>
<feature type="sequence conflict" description="In Ref. 1; AAC83987." evidence="16" ref="1">
    <original>P</original>
    <variation>S</variation>
    <location>
        <position position="70"/>
    </location>
</feature>
<feature type="sequence conflict" description="In Ref. 1; AAC83996/AAC83997." evidence="16" ref="1">
    <original>K</original>
    <variation>E</variation>
    <location>
        <position position="72"/>
    </location>
</feature>
<feature type="sequence conflict" description="In Ref. 1; AAC83988." evidence="16" ref="1">
    <original>K</original>
    <variation>R</variation>
    <location>
        <position position="73"/>
    </location>
</feature>
<feature type="sequence conflict" description="In Ref. 1; AAC83996/AAC83997." evidence="16" ref="1">
    <original>T</original>
    <variation>S</variation>
    <location>
        <position position="79"/>
    </location>
</feature>
<feature type="sequence conflict" description="In Ref. 1; AAC83990." evidence="16" ref="1">
    <original>K</original>
    <variation>Q</variation>
    <location>
        <position position="85"/>
    </location>
</feature>
<feature type="sequence conflict" description="In Ref. 1; AAC83990." evidence="16" ref="1">
    <original>N</original>
    <variation>H</variation>
    <location>
        <position position="87"/>
    </location>
</feature>
<feature type="strand" evidence="38">
    <location>
        <begin position="23"/>
        <end position="26"/>
    </location>
</feature>
<feature type="strand" evidence="38">
    <location>
        <begin position="29"/>
        <end position="31"/>
    </location>
</feature>
<feature type="strand" evidence="38">
    <location>
        <begin position="33"/>
        <end position="36"/>
    </location>
</feature>
<feature type="strand" evidence="40">
    <location>
        <begin position="38"/>
        <end position="42"/>
    </location>
</feature>
<feature type="strand" evidence="38">
    <location>
        <begin position="43"/>
        <end position="49"/>
    </location>
</feature>
<feature type="strand" evidence="39">
    <location>
        <begin position="51"/>
        <end position="53"/>
    </location>
</feature>
<feature type="helix" evidence="38">
    <location>
        <begin position="54"/>
        <end position="57"/>
    </location>
</feature>
<feature type="strand" evidence="38">
    <location>
        <begin position="59"/>
        <end position="68"/>
    </location>
</feature>
<feature type="strand" evidence="37">
    <location>
        <begin position="71"/>
        <end position="75"/>
    </location>
</feature>
<feature type="strand" evidence="38">
    <location>
        <begin position="77"/>
        <end position="81"/>
    </location>
</feature>
<feature type="strand" evidence="37">
    <location>
        <begin position="83"/>
        <end position="85"/>
    </location>
</feature>
<feature type="strand" evidence="39">
    <location>
        <begin position="91"/>
        <end position="93"/>
    </location>
</feature>
<sequence length="95" mass="10285">MKTLLLTLVVVTIVCLDLGYTIVCHTTATSPISAVTCPPGENLCYRKMWCDAFCSSRGKVVELGCAATCPSKKPYEEVTCCSTDKCNPHPKQRPG</sequence>
<name>3L21A_BUNMU</name>
<keyword id="KW-0002">3D-structure</keyword>
<keyword id="KW-0008">Acetylcholine receptor inhibiting toxin</keyword>
<keyword id="KW-0903">Direct protein sequencing</keyword>
<keyword id="KW-1015">Disulfide bond</keyword>
<keyword id="KW-0872">Ion channel impairing toxin</keyword>
<keyword id="KW-0528">Neurotoxin</keyword>
<keyword id="KW-0629">Postsynaptic neurotoxin</keyword>
<keyword id="KW-0964">Secreted</keyword>
<keyword id="KW-0732">Signal</keyword>
<keyword id="KW-0800">Toxin</keyword>
<protein>
    <recommendedName>
        <fullName evidence="15">Alpha-bungarotoxin</fullName>
        <shortName evidence="14">Alpha-Bgtx</shortName>
        <shortName evidence="13">Alpha-Btx</shortName>
    </recommendedName>
    <alternativeName>
        <fullName evidence="16">Alpha-bungarotoxin, isoform A31</fullName>
        <shortName>Alpha-BTX A31</shortName>
        <shortName>Alpha-BgTx(A31)</shortName>
        <shortName>Alpha-bungarotoxin (A31)</shortName>
        <shortName>BGTX A31</shortName>
    </alternativeName>
    <alternativeName>
        <fullName evidence="16">Alpha-elapitoxin-Bm2a</fullName>
        <shortName evidence="16">Alpha-EPTX-Bm2a</shortName>
    </alternativeName>
    <alternativeName>
        <fullName>Long neurotoxin 1</fullName>
    </alternativeName>
</protein>
<proteinExistence type="evidence at protein level"/>
<accession>P60615</accession>
<accession>P01378</accession>
<accession>Q9PRI6</accession>
<accession>Q9YGD1</accession>
<accession>Q9YI06</accession>
<accession>Q9YI07</accession>
<accession>Q9YI09</accession>
<accession>Q9YI10</accession>
<accession>Q9YI11</accession>
<accession>Q9YI12</accession>
<accession>Q9YI13</accession>
<organism>
    <name type="scientific">Bungarus multicinctus</name>
    <name type="common">Many-banded krait</name>
    <dbReference type="NCBI Taxonomy" id="8616"/>
    <lineage>
        <taxon>Eukaryota</taxon>
        <taxon>Metazoa</taxon>
        <taxon>Chordata</taxon>
        <taxon>Craniata</taxon>
        <taxon>Vertebrata</taxon>
        <taxon>Euteleostomi</taxon>
        <taxon>Lepidosauria</taxon>
        <taxon>Squamata</taxon>
        <taxon>Bifurcata</taxon>
        <taxon>Unidentata</taxon>
        <taxon>Episquamata</taxon>
        <taxon>Toxicofera</taxon>
        <taxon>Serpentes</taxon>
        <taxon>Colubroidea</taxon>
        <taxon>Elapidae</taxon>
        <taxon>Bungarinae</taxon>
        <taxon>Bungarus</taxon>
    </lineage>
</organism>
<evidence type="ECO:0000269" key="1">
    <source>
    </source>
</evidence>
<evidence type="ECO:0000269" key="2">
    <source>
    </source>
</evidence>
<evidence type="ECO:0000269" key="3">
    <source>
    </source>
</evidence>
<evidence type="ECO:0000269" key="4">
    <source>
    </source>
</evidence>
<evidence type="ECO:0000269" key="5">
    <source>
    </source>
</evidence>
<evidence type="ECO:0000269" key="6">
    <source>
    </source>
</evidence>
<evidence type="ECO:0000269" key="7">
    <source>
    </source>
</evidence>
<evidence type="ECO:0000269" key="8">
    <source>
    </source>
</evidence>
<evidence type="ECO:0000269" key="9">
    <source>
    </source>
</evidence>
<evidence type="ECO:0000269" key="10">
    <source>
    </source>
</evidence>
<evidence type="ECO:0000269" key="11">
    <source>
    </source>
</evidence>
<evidence type="ECO:0000269" key="12">
    <source>
    </source>
</evidence>
<evidence type="ECO:0000303" key="13">
    <source>
    </source>
</evidence>
<evidence type="ECO:0000303" key="14">
    <source>
    </source>
</evidence>
<evidence type="ECO:0000303" key="15">
    <source>
    </source>
</evidence>
<evidence type="ECO:0000305" key="16"/>
<evidence type="ECO:0000312" key="17">
    <source>
        <dbReference type="PDB" id="2ABX"/>
    </source>
</evidence>
<evidence type="ECO:0007744" key="18">
    <source>
        <dbReference type="PDB" id="1ABT"/>
    </source>
</evidence>
<evidence type="ECO:0007744" key="19">
    <source>
        <dbReference type="PDB" id="1BXP"/>
    </source>
</evidence>
<evidence type="ECO:0007744" key="20">
    <source>
        <dbReference type="PDB" id="1HAA"/>
    </source>
</evidence>
<evidence type="ECO:0007744" key="21">
    <source>
        <dbReference type="PDB" id="1HAJ"/>
    </source>
</evidence>
<evidence type="ECO:0007744" key="22">
    <source>
        <dbReference type="PDB" id="1HOY"/>
    </source>
</evidence>
<evidence type="ECO:0007744" key="23">
    <source>
        <dbReference type="PDB" id="1IDG"/>
    </source>
</evidence>
<evidence type="ECO:0007744" key="24">
    <source>
        <dbReference type="PDB" id="1IDH"/>
    </source>
</evidence>
<evidence type="ECO:0007744" key="25">
    <source>
        <dbReference type="PDB" id="1IDI"/>
    </source>
</evidence>
<evidence type="ECO:0007744" key="26">
    <source>
        <dbReference type="PDB" id="1IDL"/>
    </source>
</evidence>
<evidence type="ECO:0007744" key="27">
    <source>
        <dbReference type="PDB" id="1IK8"/>
    </source>
</evidence>
<evidence type="ECO:0007744" key="28">
    <source>
        <dbReference type="PDB" id="1IKC"/>
    </source>
</evidence>
<evidence type="ECO:0007744" key="29">
    <source>
        <dbReference type="PDB" id="1JBD"/>
    </source>
</evidence>
<evidence type="ECO:0007744" key="30">
    <source>
        <dbReference type="PDB" id="1KC4"/>
    </source>
</evidence>
<evidence type="ECO:0007744" key="31">
    <source>
        <dbReference type="PDB" id="1KFH"/>
    </source>
</evidence>
<evidence type="ECO:0007744" key="32">
    <source>
        <dbReference type="PDB" id="1KL8"/>
    </source>
</evidence>
<evidence type="ECO:0007744" key="33">
    <source>
        <dbReference type="PDB" id="1L4W"/>
    </source>
</evidence>
<evidence type="ECO:0007744" key="34">
    <source>
        <dbReference type="PDB" id="1LJZ"/>
    </source>
</evidence>
<evidence type="ECO:0007744" key="35">
    <source>
        <dbReference type="PDB" id="2ABX"/>
    </source>
</evidence>
<evidence type="ECO:0007744" key="36">
    <source>
        <dbReference type="PDB" id="2BTX"/>
    </source>
</evidence>
<evidence type="ECO:0007829" key="37">
    <source>
        <dbReference type="PDB" id="1ABT"/>
    </source>
</evidence>
<evidence type="ECO:0007829" key="38">
    <source>
        <dbReference type="PDB" id="1HC9"/>
    </source>
</evidence>
<evidence type="ECO:0007829" key="39">
    <source>
        <dbReference type="PDB" id="1IDH"/>
    </source>
</evidence>
<evidence type="ECO:0007829" key="40">
    <source>
        <dbReference type="PDB" id="2ABX"/>
    </source>
</evidence>
<comment type="function">
    <text evidence="6 8 11 12">Binds with high affinity to muscular (tested on Torpedo marmorata, Kd=0.4 nM) and neuronal (tested on chimeric alpha-7/CHRNA7, Kd=0.95 nM) nicotinic acetylcholine receptor (nAChR) and inhibits acetylcholine from binding to the receptor, thereby impairing neuromuscular and neuronal transmission (PubMed:9305882). It also shows an activity on GABA(A) receptors (PubMed:16549768, PubMed:25634239). It antagonises GABA-activated currents with high potency when tested on primary hippocampal neurons (PubMed:25634239). It inhibits recombinantly expressed GABA(A) receptors composed of alpha-2-beta-2-gamma-2 (GABRA2-GABRB2-GABRG2) subunits with high potency (62.3% inhibition at 20 uM of toxin) (PubMed:25634239). It also shows a weaker inhibition on GABA(A) receptors composed of alpha-1-beta-2-gamma-2 (GABRA1-GABRB2-GABRG2) subunits, alpha-4-beta-2-gamma-2 (GABRA4-GABRB2-GABRG2) subunits, and alpha-5-beta-2-gamma-2 (GABRA5-GABRB2-GABRG2) subunits (PubMed:25634239). A very weak inhibition is also observed on GABA(A) receptor composed of alpha-1-beta-3-gamma-2 (GABRA1-GABRB3-GABRG2) (PubMed:26221036). It has also been shown to bind and inhibit recombinant GABA(A) receptor beta-3/GABRB3 subunit (Kd=about 50 nM) (PubMed:16549768). In addition, it blocks the extracellular increase of dopamine evoked by nicotine only at the higher dose (4.2 uM) (PubMed:9840221). In vivo, when intraperitoneally injected into mice, induces flaccid paralysis of the limbs and respiratory distress, and causes death in a dose-dependent manner.</text>
</comment>
<comment type="subunit">
    <text evidence="1 2 3 4 5">Monomer in solution, homodimer in crystal state.</text>
</comment>
<comment type="interaction">
    <interactant intactId="EBI-7516391">
        <id>P60615</id>
    </interactant>
    <interactant intactId="EBI-79422">
        <id>Q05941</id>
        <label>Chrna7</label>
    </interactant>
    <organismsDiffer>true</organismsDiffer>
    <experiments>4</experiments>
</comment>
<comment type="subcellular location">
    <subcellularLocation>
        <location evidence="10">Secreted</location>
    </subcellularLocation>
</comment>
<comment type="tissue specificity">
    <text evidence="16">Expressed by the venom gland.</text>
</comment>
<comment type="toxic dose">
    <text>LD(50) is 0.3 mg/kg by subcutaneous injection.</text>
</comment>
<comment type="miscellaneous">
    <text evidence="16">Is identical to Alpha-bungarotoxin (A31) from B.candidus (AC Q7T3J2).</text>
</comment>
<comment type="similarity">
    <text evidence="16">Belongs to the three-finger toxin family. Long-chain subfamily. Type II alpha-neurotoxin sub-subfamily.</text>
</comment>
<comment type="caution">
    <text evidence="16">PubMed:9837992 indicates that a number of mRNA with sequence conflict(s) are produced by RNA editing. This seems not to be the case as discussed in PubMed:10497260.</text>
</comment>
<dbReference type="EMBL" id="AF056400">
    <property type="protein sequence ID" value="AAC83981.1"/>
    <property type="molecule type" value="mRNA"/>
</dbReference>
<dbReference type="EMBL" id="AF056401">
    <property type="protein sequence ID" value="AAC83982.1"/>
    <property type="molecule type" value="Genomic_DNA"/>
</dbReference>
<dbReference type="EMBL" id="AF056402">
    <property type="protein sequence ID" value="AAC83983.1"/>
    <property type="molecule type" value="mRNA"/>
</dbReference>
<dbReference type="EMBL" id="AF056403">
    <property type="protein sequence ID" value="AAC83984.1"/>
    <property type="molecule type" value="mRNA"/>
</dbReference>
<dbReference type="EMBL" id="AF056404">
    <property type="protein sequence ID" value="AAC83985.1"/>
    <property type="molecule type" value="mRNA"/>
</dbReference>
<dbReference type="EMBL" id="AF056405">
    <property type="protein sequence ID" value="AAC83986.1"/>
    <property type="molecule type" value="mRNA"/>
</dbReference>
<dbReference type="EMBL" id="AF056406">
    <property type="protein sequence ID" value="AAC83987.1"/>
    <property type="molecule type" value="mRNA"/>
</dbReference>
<dbReference type="EMBL" id="AF056407">
    <property type="protein sequence ID" value="AAC83988.1"/>
    <property type="molecule type" value="mRNA"/>
</dbReference>
<dbReference type="EMBL" id="AF056408">
    <property type="protein sequence ID" value="AAC83989.1"/>
    <property type="molecule type" value="mRNA"/>
</dbReference>
<dbReference type="EMBL" id="AF056409">
    <property type="protein sequence ID" value="AAC83990.1"/>
    <property type="molecule type" value="mRNA"/>
</dbReference>
<dbReference type="EMBL" id="AF056410">
    <property type="protein sequence ID" value="AAC83991.1"/>
    <property type="molecule type" value="mRNA"/>
</dbReference>
<dbReference type="EMBL" id="AF056411">
    <property type="protein sequence ID" value="AAC83992.1"/>
    <property type="molecule type" value="mRNA"/>
</dbReference>
<dbReference type="EMBL" id="AF056412">
    <property type="protein sequence ID" value="AAC83993.1"/>
    <property type="molecule type" value="mRNA"/>
</dbReference>
<dbReference type="EMBL" id="AF056413">
    <property type="protein sequence ID" value="AAC83994.1"/>
    <property type="molecule type" value="mRNA"/>
</dbReference>
<dbReference type="EMBL" id="AF056415">
    <property type="protein sequence ID" value="AAC83996.1"/>
    <property type="molecule type" value="mRNA"/>
</dbReference>
<dbReference type="EMBL" id="AF056416">
    <property type="protein sequence ID" value="AAC83997.1"/>
    <property type="molecule type" value="mRNA"/>
</dbReference>
<dbReference type="EMBL" id="Y17694">
    <property type="protein sequence ID" value="CAB51844.1"/>
    <property type="molecule type" value="Genomic_DNA"/>
</dbReference>
<dbReference type="EMBL" id="Y17058">
    <property type="protein sequence ID" value="CAB51842.1"/>
    <property type="molecule type" value="mRNA"/>
</dbReference>
<dbReference type="EMBL" id="X91990">
    <property type="protein sequence ID" value="CAA63045.1"/>
    <property type="molecule type" value="mRNA"/>
</dbReference>
<dbReference type="PIR" id="A31519">
    <property type="entry name" value="N2KF1U"/>
</dbReference>
<dbReference type="PDB" id="1ABT">
    <property type="method" value="NMR"/>
    <property type="chains" value="A=22-95"/>
</dbReference>
<dbReference type="PDB" id="1BXP">
    <property type="method" value="NMR"/>
    <property type="chains" value="A=22-95"/>
</dbReference>
<dbReference type="PDB" id="1HAA">
    <property type="method" value="NMR"/>
    <property type="chains" value="A=22-95"/>
</dbReference>
<dbReference type="PDB" id="1HAJ">
    <property type="method" value="NMR"/>
    <property type="chains" value="A=22-95"/>
</dbReference>
<dbReference type="PDB" id="1HC9">
    <property type="method" value="X-ray"/>
    <property type="resolution" value="1.80 A"/>
    <property type="chains" value="B=22-95"/>
</dbReference>
<dbReference type="PDB" id="1HOY">
    <property type="method" value="NMR"/>
    <property type="chains" value="A=22-95"/>
</dbReference>
<dbReference type="PDB" id="1IDG">
    <property type="method" value="NMR"/>
    <property type="chains" value="A=22-95"/>
</dbReference>
<dbReference type="PDB" id="1IDH">
    <property type="method" value="NMR"/>
    <property type="chains" value="A=22-95"/>
</dbReference>
<dbReference type="PDB" id="1IDI">
    <property type="method" value="NMR"/>
    <property type="chains" value="A=22-95"/>
</dbReference>
<dbReference type="PDB" id="1IDL">
    <property type="method" value="NMR"/>
    <property type="chains" value="A=22-95"/>
</dbReference>
<dbReference type="PDB" id="1IK8">
    <property type="method" value="NMR"/>
    <property type="chains" value="A=22-95"/>
</dbReference>
<dbReference type="PDB" id="1IKC">
    <property type="method" value="NMR"/>
    <property type="chains" value="A=22-95"/>
</dbReference>
<dbReference type="PDB" id="1JBD">
    <property type="method" value="NMR"/>
    <property type="chains" value="A=22-95"/>
</dbReference>
<dbReference type="PDB" id="1KC4">
    <property type="method" value="NMR"/>
    <property type="chains" value="A=22-95"/>
</dbReference>
<dbReference type="PDB" id="1KFH">
    <property type="method" value="NMR"/>
    <property type="chains" value="A=22-95"/>
</dbReference>
<dbReference type="PDB" id="1KL8">
    <property type="method" value="NMR"/>
    <property type="chains" value="A=22-95"/>
</dbReference>
<dbReference type="PDB" id="1L4W">
    <property type="method" value="NMR"/>
    <property type="chains" value="A=22-95"/>
</dbReference>
<dbReference type="PDB" id="1LJZ">
    <property type="method" value="NMR"/>
    <property type="chains" value="A=22-95"/>
</dbReference>
<dbReference type="PDB" id="1RGJ">
    <property type="method" value="NMR"/>
    <property type="chains" value="A=22-95"/>
</dbReference>
<dbReference type="PDB" id="2ABX">
    <property type="method" value="X-ray"/>
    <property type="resolution" value="2.50 A"/>
    <property type="chains" value="A/B=22-95"/>
</dbReference>
<dbReference type="PDB" id="2BTX">
    <property type="method" value="NMR"/>
    <property type="chains" value="A=22-95"/>
</dbReference>
<dbReference type="PDB" id="6UWZ">
    <property type="method" value="EM"/>
    <property type="resolution" value="2.69 A"/>
    <property type="chains" value="F/G=22-95"/>
</dbReference>
<dbReference type="PDB" id="8DA1">
    <property type="method" value="X-ray"/>
    <property type="resolution" value="2.67 A"/>
    <property type="chains" value="I=22-95"/>
</dbReference>
<dbReference type="PDBsum" id="1ABT"/>
<dbReference type="PDBsum" id="1BXP"/>
<dbReference type="PDBsum" id="1HAA"/>
<dbReference type="PDBsum" id="1HAJ"/>
<dbReference type="PDBsum" id="1HC9"/>
<dbReference type="PDBsum" id="1HOY"/>
<dbReference type="PDBsum" id="1IDG"/>
<dbReference type="PDBsum" id="1IDH"/>
<dbReference type="PDBsum" id="1IDI"/>
<dbReference type="PDBsum" id="1IDL"/>
<dbReference type="PDBsum" id="1IK8"/>
<dbReference type="PDBsum" id="1IKC"/>
<dbReference type="PDBsum" id="1JBD"/>
<dbReference type="PDBsum" id="1KC4"/>
<dbReference type="PDBsum" id="1KFH"/>
<dbReference type="PDBsum" id="1KL8"/>
<dbReference type="PDBsum" id="1L4W"/>
<dbReference type="PDBsum" id="1LJZ"/>
<dbReference type="PDBsum" id="1RGJ"/>
<dbReference type="PDBsum" id="2ABX"/>
<dbReference type="PDBsum" id="2BTX"/>
<dbReference type="PDBsum" id="6UWZ"/>
<dbReference type="PDBsum" id="8DA1"/>
<dbReference type="BMRB" id="P60615"/>
<dbReference type="EMDB" id="EMD-20928"/>
<dbReference type="SMR" id="P60615"/>
<dbReference type="IntAct" id="P60615">
    <property type="interactions" value="5"/>
</dbReference>
<dbReference type="MINT" id="P60615"/>
<dbReference type="BindingDB" id="P60615"/>
<dbReference type="TCDB" id="1.C.74.1.2">
    <property type="family name" value="the snake cytotoxin (sct) family"/>
</dbReference>
<dbReference type="EvolutionaryTrace" id="P60615"/>
<dbReference type="GO" id="GO:0005576">
    <property type="term" value="C:extracellular region"/>
    <property type="evidence" value="ECO:0007669"/>
    <property type="project" value="UniProtKB-SubCell"/>
</dbReference>
<dbReference type="GO" id="GO:0030550">
    <property type="term" value="F:acetylcholine receptor inhibitor activity"/>
    <property type="evidence" value="ECO:0007669"/>
    <property type="project" value="UniProtKB-KW"/>
</dbReference>
<dbReference type="GO" id="GO:0099106">
    <property type="term" value="F:ion channel regulator activity"/>
    <property type="evidence" value="ECO:0007669"/>
    <property type="project" value="UniProtKB-KW"/>
</dbReference>
<dbReference type="GO" id="GO:0090729">
    <property type="term" value="F:toxin activity"/>
    <property type="evidence" value="ECO:0007669"/>
    <property type="project" value="UniProtKB-KW"/>
</dbReference>
<dbReference type="CDD" id="cd00206">
    <property type="entry name" value="TFP_snake_toxin"/>
    <property type="match status" value="1"/>
</dbReference>
<dbReference type="Gene3D" id="2.10.60.10">
    <property type="entry name" value="CD59"/>
    <property type="match status" value="1"/>
</dbReference>
<dbReference type="InterPro" id="IPR003571">
    <property type="entry name" value="Snake_3FTx"/>
</dbReference>
<dbReference type="InterPro" id="IPR045860">
    <property type="entry name" value="Snake_toxin-like_sf"/>
</dbReference>
<dbReference type="InterPro" id="IPR018354">
    <property type="entry name" value="Snake_toxin_con_site"/>
</dbReference>
<dbReference type="InterPro" id="IPR054131">
    <property type="entry name" value="Toxin_cobra-type"/>
</dbReference>
<dbReference type="Pfam" id="PF21947">
    <property type="entry name" value="Toxin_cobra-type"/>
    <property type="match status" value="1"/>
</dbReference>
<dbReference type="SUPFAM" id="SSF57302">
    <property type="entry name" value="Snake toxin-like"/>
    <property type="match status" value="1"/>
</dbReference>
<dbReference type="PROSITE" id="PS00272">
    <property type="entry name" value="SNAKE_TOXIN"/>
    <property type="match status" value="1"/>
</dbReference>